<accession>A9IIG9</accession>
<keyword id="KW-0687">Ribonucleoprotein</keyword>
<keyword id="KW-0689">Ribosomal protein</keyword>
<protein>
    <recommendedName>
        <fullName evidence="1">Large ribosomal subunit protein bL32</fullName>
    </recommendedName>
    <alternativeName>
        <fullName evidence="3">50S ribosomal protein L32</fullName>
    </alternativeName>
</protein>
<comment type="similarity">
    <text evidence="1">Belongs to the bacterial ribosomal protein bL32 family.</text>
</comment>
<gene>
    <name evidence="1" type="primary">rpmF</name>
    <name type="ordered locus">Bpet1751</name>
</gene>
<sequence length="60" mass="6824">MAVQQNKKSPSKRGMHRSHDFLVNPSTAIEPTTGETHLRHHISPNGFYRGRKVLKTKADE</sequence>
<organism>
    <name type="scientific">Bordetella petrii (strain ATCC BAA-461 / DSM 12804 / CCUG 43448)</name>
    <dbReference type="NCBI Taxonomy" id="340100"/>
    <lineage>
        <taxon>Bacteria</taxon>
        <taxon>Pseudomonadati</taxon>
        <taxon>Pseudomonadota</taxon>
        <taxon>Betaproteobacteria</taxon>
        <taxon>Burkholderiales</taxon>
        <taxon>Alcaligenaceae</taxon>
        <taxon>Bordetella</taxon>
    </lineage>
</organism>
<name>RL32_BORPD</name>
<reference key="1">
    <citation type="journal article" date="2008" name="BMC Genomics">
        <title>The missing link: Bordetella petrii is endowed with both the metabolic versatility of environmental bacteria and virulence traits of pathogenic Bordetellae.</title>
        <authorList>
            <person name="Gross R."/>
            <person name="Guzman C.A."/>
            <person name="Sebaihia M."/>
            <person name="Martin dos Santos V.A.P."/>
            <person name="Pieper D.H."/>
            <person name="Koebnik R."/>
            <person name="Lechner M."/>
            <person name="Bartels D."/>
            <person name="Buhrmester J."/>
            <person name="Choudhuri J.V."/>
            <person name="Ebensen T."/>
            <person name="Gaigalat L."/>
            <person name="Herrmann S."/>
            <person name="Khachane A.N."/>
            <person name="Larisch C."/>
            <person name="Link S."/>
            <person name="Linke B."/>
            <person name="Meyer F."/>
            <person name="Mormann S."/>
            <person name="Nakunst D."/>
            <person name="Rueckert C."/>
            <person name="Schneiker-Bekel S."/>
            <person name="Schulze K."/>
            <person name="Voerholter F.-J."/>
            <person name="Yevsa T."/>
            <person name="Engle J.T."/>
            <person name="Goldman W.E."/>
            <person name="Puehler A."/>
            <person name="Goebel U.B."/>
            <person name="Goesmann A."/>
            <person name="Bloecker H."/>
            <person name="Kaiser O."/>
            <person name="Martinez-Arias R."/>
        </authorList>
    </citation>
    <scope>NUCLEOTIDE SEQUENCE [LARGE SCALE GENOMIC DNA]</scope>
    <source>
        <strain>ATCC BAA-461 / DSM 12804 / CCUG 43448</strain>
    </source>
</reference>
<dbReference type="EMBL" id="AM902716">
    <property type="protein sequence ID" value="CAP42090.1"/>
    <property type="molecule type" value="Genomic_DNA"/>
</dbReference>
<dbReference type="SMR" id="A9IIG9"/>
<dbReference type="STRING" id="94624.Bpet1751"/>
<dbReference type="KEGG" id="bpt:Bpet1751"/>
<dbReference type="eggNOG" id="COG0333">
    <property type="taxonomic scope" value="Bacteria"/>
</dbReference>
<dbReference type="Proteomes" id="UP000001225">
    <property type="component" value="Chromosome"/>
</dbReference>
<dbReference type="GO" id="GO:0015934">
    <property type="term" value="C:large ribosomal subunit"/>
    <property type="evidence" value="ECO:0007669"/>
    <property type="project" value="InterPro"/>
</dbReference>
<dbReference type="GO" id="GO:0003735">
    <property type="term" value="F:structural constituent of ribosome"/>
    <property type="evidence" value="ECO:0007669"/>
    <property type="project" value="InterPro"/>
</dbReference>
<dbReference type="GO" id="GO:0006412">
    <property type="term" value="P:translation"/>
    <property type="evidence" value="ECO:0007669"/>
    <property type="project" value="UniProtKB-UniRule"/>
</dbReference>
<dbReference type="HAMAP" id="MF_00340">
    <property type="entry name" value="Ribosomal_bL32"/>
    <property type="match status" value="1"/>
</dbReference>
<dbReference type="InterPro" id="IPR002677">
    <property type="entry name" value="Ribosomal_bL32"/>
</dbReference>
<dbReference type="InterPro" id="IPR044957">
    <property type="entry name" value="Ribosomal_bL32_bact"/>
</dbReference>
<dbReference type="InterPro" id="IPR011332">
    <property type="entry name" value="Ribosomal_zn-bd"/>
</dbReference>
<dbReference type="NCBIfam" id="TIGR01031">
    <property type="entry name" value="rpmF_bact"/>
    <property type="match status" value="1"/>
</dbReference>
<dbReference type="PANTHER" id="PTHR35534">
    <property type="entry name" value="50S RIBOSOMAL PROTEIN L32"/>
    <property type="match status" value="1"/>
</dbReference>
<dbReference type="PANTHER" id="PTHR35534:SF1">
    <property type="entry name" value="LARGE RIBOSOMAL SUBUNIT PROTEIN BL32"/>
    <property type="match status" value="1"/>
</dbReference>
<dbReference type="Pfam" id="PF01783">
    <property type="entry name" value="Ribosomal_L32p"/>
    <property type="match status" value="1"/>
</dbReference>
<dbReference type="SUPFAM" id="SSF57829">
    <property type="entry name" value="Zn-binding ribosomal proteins"/>
    <property type="match status" value="1"/>
</dbReference>
<feature type="chain" id="PRO_1000120094" description="Large ribosomal subunit protein bL32">
    <location>
        <begin position="1"/>
        <end position="60"/>
    </location>
</feature>
<feature type="region of interest" description="Disordered" evidence="2">
    <location>
        <begin position="1"/>
        <end position="60"/>
    </location>
</feature>
<feature type="compositionally biased region" description="Polar residues" evidence="2">
    <location>
        <begin position="24"/>
        <end position="35"/>
    </location>
</feature>
<feature type="compositionally biased region" description="Basic residues" evidence="2">
    <location>
        <begin position="49"/>
        <end position="60"/>
    </location>
</feature>
<evidence type="ECO:0000255" key="1">
    <source>
        <dbReference type="HAMAP-Rule" id="MF_00340"/>
    </source>
</evidence>
<evidence type="ECO:0000256" key="2">
    <source>
        <dbReference type="SAM" id="MobiDB-lite"/>
    </source>
</evidence>
<evidence type="ECO:0000305" key="3"/>
<proteinExistence type="inferred from homology"/>